<protein>
    <recommendedName>
        <fullName evidence="1">3-isopropylmalate dehydratase large subunit</fullName>
        <ecNumber evidence="1">4.2.1.33</ecNumber>
    </recommendedName>
    <alternativeName>
        <fullName evidence="1">Alpha-IPM isomerase</fullName>
        <shortName evidence="1">IPMI</shortName>
    </alternativeName>
    <alternativeName>
        <fullName evidence="1">Isopropylmalate isomerase</fullName>
    </alternativeName>
</protein>
<evidence type="ECO:0000255" key="1">
    <source>
        <dbReference type="HAMAP-Rule" id="MF_01026"/>
    </source>
</evidence>
<evidence type="ECO:0000305" key="2"/>
<reference key="1">
    <citation type="journal article" date="2001" name="Nature">
        <title>Massive gene decay in the leprosy bacillus.</title>
        <authorList>
            <person name="Cole S.T."/>
            <person name="Eiglmeier K."/>
            <person name="Parkhill J."/>
            <person name="James K.D."/>
            <person name="Thomson N.R."/>
            <person name="Wheeler P.R."/>
            <person name="Honore N."/>
            <person name="Garnier T."/>
            <person name="Churcher C.M."/>
            <person name="Harris D.E."/>
            <person name="Mungall K.L."/>
            <person name="Basham D."/>
            <person name="Brown D."/>
            <person name="Chillingworth T."/>
            <person name="Connor R."/>
            <person name="Davies R.M."/>
            <person name="Devlin K."/>
            <person name="Duthoy S."/>
            <person name="Feltwell T."/>
            <person name="Fraser A."/>
            <person name="Hamlin N."/>
            <person name="Holroyd S."/>
            <person name="Hornsby T."/>
            <person name="Jagels K."/>
            <person name="Lacroix C."/>
            <person name="Maclean J."/>
            <person name="Moule S."/>
            <person name="Murphy L.D."/>
            <person name="Oliver K."/>
            <person name="Quail M.A."/>
            <person name="Rajandream M.A."/>
            <person name="Rutherford K.M."/>
            <person name="Rutter S."/>
            <person name="Seeger K."/>
            <person name="Simon S."/>
            <person name="Simmonds M."/>
            <person name="Skelton J."/>
            <person name="Squares R."/>
            <person name="Squares S."/>
            <person name="Stevens K."/>
            <person name="Taylor K."/>
            <person name="Whitehead S."/>
            <person name="Woodward J.R."/>
            <person name="Barrell B.G."/>
        </authorList>
    </citation>
    <scope>NUCLEOTIDE SEQUENCE [LARGE SCALE GENOMIC DNA]</scope>
    <source>
        <strain>TN</strain>
    </source>
</reference>
<proteinExistence type="inferred from homology"/>
<sequence length="476" mass="51010">MGGARKPRTLAEKVWDDHVVVAGQGYHQDRGPDLIYIDLHLVHEVTSPQAFDGLRLAGRWVRRPDLTVATEDHNVPTVDIDKPIADPVSRIQVETLRRNCAEFGVRLHPMGDIEQGIVHVVGPQLGLTQPGMTIVCGDSHTSTHGAFGAIAMGIGTSEIEHVLATQTLPLRPFKTMAVTVDGRLPAGVTAKDIILALIAKIGTGGGQGYVLEYRGSVIESMSMEGRMTICNMSIEAGARAGMVAPDETTYEFLRDRPHAPTGKQWDAAVAYWQQLRTDDDAVFDTEVYLDATSLSPFVTWGTNPGQGVPLAASVPDPELMIDDVARQAAEKALAYMDLRPGTPMRDIAVDAVFVGSCTNGRIEDLRLVADVLRGHKVADGVRMLIVPGSMRVRAQAEAEGLGEIFITAGAQWRQPGCSMCLGMNPDQLAPGERCAATSNRNFEGRQGKGGRTHLVSPAVAAATAVRGTFSAPADLN</sequence>
<dbReference type="EC" id="4.2.1.33" evidence="1"/>
<dbReference type="EMBL" id="Z99263">
    <property type="protein sequence ID" value="CAB16447.1"/>
    <property type="molecule type" value="Genomic_DNA"/>
</dbReference>
<dbReference type="EMBL" id="AL583923">
    <property type="protein sequence ID" value="CAC30638.1"/>
    <property type="status" value="ALT_INIT"/>
    <property type="molecule type" value="Genomic_DNA"/>
</dbReference>
<dbReference type="PIR" id="G87119">
    <property type="entry name" value="G87119"/>
</dbReference>
<dbReference type="PIR" id="T45425">
    <property type="entry name" value="T45425"/>
</dbReference>
<dbReference type="SMR" id="O33123"/>
<dbReference type="STRING" id="272631.gene:17575528"/>
<dbReference type="KEGG" id="mle:ML1685"/>
<dbReference type="Leproma" id="ML1685"/>
<dbReference type="eggNOG" id="COG0065">
    <property type="taxonomic scope" value="Bacteria"/>
</dbReference>
<dbReference type="HOGENOM" id="CLU_006714_3_4_11"/>
<dbReference type="UniPathway" id="UPA00048">
    <property type="reaction ID" value="UER00071"/>
</dbReference>
<dbReference type="Proteomes" id="UP000000806">
    <property type="component" value="Chromosome"/>
</dbReference>
<dbReference type="GO" id="GO:0003861">
    <property type="term" value="F:3-isopropylmalate dehydratase activity"/>
    <property type="evidence" value="ECO:0007669"/>
    <property type="project" value="UniProtKB-UniRule"/>
</dbReference>
<dbReference type="GO" id="GO:0051539">
    <property type="term" value="F:4 iron, 4 sulfur cluster binding"/>
    <property type="evidence" value="ECO:0007669"/>
    <property type="project" value="UniProtKB-KW"/>
</dbReference>
<dbReference type="GO" id="GO:0046872">
    <property type="term" value="F:metal ion binding"/>
    <property type="evidence" value="ECO:0007669"/>
    <property type="project" value="UniProtKB-KW"/>
</dbReference>
<dbReference type="GO" id="GO:0009098">
    <property type="term" value="P:L-leucine biosynthetic process"/>
    <property type="evidence" value="ECO:0007669"/>
    <property type="project" value="UniProtKB-UniRule"/>
</dbReference>
<dbReference type="CDD" id="cd01583">
    <property type="entry name" value="IPMI"/>
    <property type="match status" value="1"/>
</dbReference>
<dbReference type="FunFam" id="3.30.499.10:FF:000007">
    <property type="entry name" value="3-isopropylmalate dehydratase large subunit"/>
    <property type="match status" value="1"/>
</dbReference>
<dbReference type="Gene3D" id="3.30.499.10">
    <property type="entry name" value="Aconitase, domain 3"/>
    <property type="match status" value="2"/>
</dbReference>
<dbReference type="HAMAP" id="MF_01026">
    <property type="entry name" value="LeuC_type1"/>
    <property type="match status" value="1"/>
</dbReference>
<dbReference type="InterPro" id="IPR004430">
    <property type="entry name" value="3-IsopropMal_deHydase_lsu"/>
</dbReference>
<dbReference type="InterPro" id="IPR015931">
    <property type="entry name" value="Acnase/IPM_dHydase_lsu_aba_1/3"/>
</dbReference>
<dbReference type="InterPro" id="IPR001030">
    <property type="entry name" value="Acoase/IPM_deHydtase_lsu_aba"/>
</dbReference>
<dbReference type="InterPro" id="IPR018136">
    <property type="entry name" value="Aconitase_4Fe-4S_BS"/>
</dbReference>
<dbReference type="InterPro" id="IPR036008">
    <property type="entry name" value="Aconitase_4Fe-4S_dom"/>
</dbReference>
<dbReference type="InterPro" id="IPR050067">
    <property type="entry name" value="IPM_dehydratase_rel_enz"/>
</dbReference>
<dbReference type="InterPro" id="IPR033941">
    <property type="entry name" value="IPMI_cat"/>
</dbReference>
<dbReference type="NCBIfam" id="TIGR00170">
    <property type="entry name" value="leuC"/>
    <property type="match status" value="1"/>
</dbReference>
<dbReference type="NCBIfam" id="NF004016">
    <property type="entry name" value="PRK05478.1"/>
    <property type="match status" value="1"/>
</dbReference>
<dbReference type="NCBIfam" id="NF009116">
    <property type="entry name" value="PRK12466.1"/>
    <property type="match status" value="1"/>
</dbReference>
<dbReference type="PANTHER" id="PTHR43822:SF9">
    <property type="entry name" value="3-ISOPROPYLMALATE DEHYDRATASE"/>
    <property type="match status" value="1"/>
</dbReference>
<dbReference type="PANTHER" id="PTHR43822">
    <property type="entry name" value="HOMOACONITASE, MITOCHONDRIAL-RELATED"/>
    <property type="match status" value="1"/>
</dbReference>
<dbReference type="Pfam" id="PF00330">
    <property type="entry name" value="Aconitase"/>
    <property type="match status" value="1"/>
</dbReference>
<dbReference type="PRINTS" id="PR00415">
    <property type="entry name" value="ACONITASE"/>
</dbReference>
<dbReference type="SUPFAM" id="SSF53732">
    <property type="entry name" value="Aconitase iron-sulfur domain"/>
    <property type="match status" value="1"/>
</dbReference>
<dbReference type="PROSITE" id="PS00450">
    <property type="entry name" value="ACONITASE_1"/>
    <property type="match status" value="1"/>
</dbReference>
<dbReference type="PROSITE" id="PS01244">
    <property type="entry name" value="ACONITASE_2"/>
    <property type="match status" value="1"/>
</dbReference>
<name>LEUC_MYCLE</name>
<keyword id="KW-0004">4Fe-4S</keyword>
<keyword id="KW-0028">Amino-acid biosynthesis</keyword>
<keyword id="KW-0100">Branched-chain amino acid biosynthesis</keyword>
<keyword id="KW-0408">Iron</keyword>
<keyword id="KW-0411">Iron-sulfur</keyword>
<keyword id="KW-0432">Leucine biosynthesis</keyword>
<keyword id="KW-0456">Lyase</keyword>
<keyword id="KW-0479">Metal-binding</keyword>
<keyword id="KW-1185">Reference proteome</keyword>
<organism>
    <name type="scientific">Mycobacterium leprae (strain TN)</name>
    <dbReference type="NCBI Taxonomy" id="272631"/>
    <lineage>
        <taxon>Bacteria</taxon>
        <taxon>Bacillati</taxon>
        <taxon>Actinomycetota</taxon>
        <taxon>Actinomycetes</taxon>
        <taxon>Mycobacteriales</taxon>
        <taxon>Mycobacteriaceae</taxon>
        <taxon>Mycobacterium</taxon>
    </lineage>
</organism>
<gene>
    <name evidence="1" type="primary">leuC</name>
    <name type="ordered locus">ML1685</name>
    <name type="ORF">MLCB637.32</name>
</gene>
<feature type="chain" id="PRO_0000076764" description="3-isopropylmalate dehydratase large subunit">
    <location>
        <begin position="1"/>
        <end position="476"/>
    </location>
</feature>
<feature type="binding site" evidence="1">
    <location>
        <position position="357"/>
    </location>
    <ligand>
        <name>[4Fe-4S] cluster</name>
        <dbReference type="ChEBI" id="CHEBI:49883"/>
    </ligand>
</feature>
<feature type="binding site" evidence="1">
    <location>
        <position position="417"/>
    </location>
    <ligand>
        <name>[4Fe-4S] cluster</name>
        <dbReference type="ChEBI" id="CHEBI:49883"/>
    </ligand>
</feature>
<feature type="binding site" evidence="1">
    <location>
        <position position="420"/>
    </location>
    <ligand>
        <name>[4Fe-4S] cluster</name>
        <dbReference type="ChEBI" id="CHEBI:49883"/>
    </ligand>
</feature>
<comment type="function">
    <text evidence="1">Catalyzes the isomerization between 2-isopropylmalate and 3-isopropylmalate, via the formation of 2-isopropylmaleate.</text>
</comment>
<comment type="catalytic activity">
    <reaction evidence="1">
        <text>(2R,3S)-3-isopropylmalate = (2S)-2-isopropylmalate</text>
        <dbReference type="Rhea" id="RHEA:32287"/>
        <dbReference type="ChEBI" id="CHEBI:1178"/>
        <dbReference type="ChEBI" id="CHEBI:35121"/>
        <dbReference type="EC" id="4.2.1.33"/>
    </reaction>
</comment>
<comment type="cofactor">
    <cofactor evidence="1">
        <name>[4Fe-4S] cluster</name>
        <dbReference type="ChEBI" id="CHEBI:49883"/>
    </cofactor>
    <text evidence="1">Binds 1 [4Fe-4S] cluster per subunit.</text>
</comment>
<comment type="pathway">
    <text evidence="1">Amino-acid biosynthesis; L-leucine biosynthesis; L-leucine from 3-methyl-2-oxobutanoate: step 2/4.</text>
</comment>
<comment type="subunit">
    <text evidence="1">Heterodimer of LeuC and LeuD.</text>
</comment>
<comment type="similarity">
    <text evidence="1">Belongs to the aconitase/IPM isomerase family. LeuC type 1 subfamily.</text>
</comment>
<comment type="sequence caution" evidence="2">
    <conflict type="erroneous initiation">
        <sequence resource="EMBL-CDS" id="CAC30638"/>
    </conflict>
</comment>
<accession>O33123</accession>